<sequence length="204" mass="23105">MKKYRDHYFLKAKQENYPARSVYKLKEIDNRFKIFRQGMKVLDLGAAPGSWSLGAAEKVGPRGRVLACDLQETDTVFPDNVTFMQENVFERSEAFENLLDEIAPFDVVISDMAPRTTGTRFTDQARSLELCLEALAVADRCLIKGGSFVVKIFMGPDVQELVQAMRQRFSAVKSFKPKSSRAESKETFYVCLGYRGVETSDTDK</sequence>
<proteinExistence type="inferred from homology"/>
<accession>A1VC40</accession>
<reference key="1">
    <citation type="journal article" date="2009" name="Environ. Microbiol.">
        <title>Contribution of mobile genetic elements to Desulfovibrio vulgaris genome plasticity.</title>
        <authorList>
            <person name="Walker C.B."/>
            <person name="Stolyar S."/>
            <person name="Chivian D."/>
            <person name="Pinel N."/>
            <person name="Gabster J.A."/>
            <person name="Dehal P.S."/>
            <person name="He Z."/>
            <person name="Yang Z.K."/>
            <person name="Yen H.C."/>
            <person name="Zhou J."/>
            <person name="Wall J.D."/>
            <person name="Hazen T.C."/>
            <person name="Arkin A.P."/>
            <person name="Stahl D.A."/>
        </authorList>
    </citation>
    <scope>NUCLEOTIDE SEQUENCE [LARGE SCALE GENOMIC DNA]</scope>
    <source>
        <strain>DP4</strain>
    </source>
</reference>
<comment type="function">
    <text evidence="1">Specifically methylates the uridine in position 2552 of 23S rRNA at the 2'-O position of the ribose in the fully assembled 50S ribosomal subunit.</text>
</comment>
<comment type="catalytic activity">
    <reaction evidence="1">
        <text>uridine(2552) in 23S rRNA + S-adenosyl-L-methionine = 2'-O-methyluridine(2552) in 23S rRNA + S-adenosyl-L-homocysteine + H(+)</text>
        <dbReference type="Rhea" id="RHEA:42720"/>
        <dbReference type="Rhea" id="RHEA-COMP:10202"/>
        <dbReference type="Rhea" id="RHEA-COMP:10203"/>
        <dbReference type="ChEBI" id="CHEBI:15378"/>
        <dbReference type="ChEBI" id="CHEBI:57856"/>
        <dbReference type="ChEBI" id="CHEBI:59789"/>
        <dbReference type="ChEBI" id="CHEBI:65315"/>
        <dbReference type="ChEBI" id="CHEBI:74478"/>
        <dbReference type="EC" id="2.1.1.166"/>
    </reaction>
</comment>
<comment type="subcellular location">
    <subcellularLocation>
        <location evidence="1">Cytoplasm</location>
    </subcellularLocation>
</comment>
<comment type="similarity">
    <text evidence="1">Belongs to the class I-like SAM-binding methyltransferase superfamily. RNA methyltransferase RlmE family.</text>
</comment>
<feature type="chain" id="PRO_0000300591" description="Ribosomal RNA large subunit methyltransferase E">
    <location>
        <begin position="1"/>
        <end position="204"/>
    </location>
</feature>
<feature type="active site" description="Proton acceptor" evidence="1">
    <location>
        <position position="151"/>
    </location>
</feature>
<feature type="binding site" evidence="1">
    <location>
        <position position="49"/>
    </location>
    <ligand>
        <name>S-adenosyl-L-methionine</name>
        <dbReference type="ChEBI" id="CHEBI:59789"/>
    </ligand>
</feature>
<feature type="binding site" evidence="1">
    <location>
        <position position="51"/>
    </location>
    <ligand>
        <name>S-adenosyl-L-methionine</name>
        <dbReference type="ChEBI" id="CHEBI:59789"/>
    </ligand>
</feature>
<feature type="binding site" evidence="1">
    <location>
        <position position="69"/>
    </location>
    <ligand>
        <name>S-adenosyl-L-methionine</name>
        <dbReference type="ChEBI" id="CHEBI:59789"/>
    </ligand>
</feature>
<feature type="binding site" evidence="1">
    <location>
        <position position="87"/>
    </location>
    <ligand>
        <name>S-adenosyl-L-methionine</name>
        <dbReference type="ChEBI" id="CHEBI:59789"/>
    </ligand>
</feature>
<feature type="binding site" evidence="1">
    <location>
        <position position="111"/>
    </location>
    <ligand>
        <name>S-adenosyl-L-methionine</name>
        <dbReference type="ChEBI" id="CHEBI:59789"/>
    </ligand>
</feature>
<organism>
    <name type="scientific">Nitratidesulfovibrio vulgaris (strain DP4)</name>
    <name type="common">Desulfovibrio vulgaris</name>
    <dbReference type="NCBI Taxonomy" id="391774"/>
    <lineage>
        <taxon>Bacteria</taxon>
        <taxon>Pseudomonadati</taxon>
        <taxon>Thermodesulfobacteriota</taxon>
        <taxon>Desulfovibrionia</taxon>
        <taxon>Desulfovibrionales</taxon>
        <taxon>Desulfovibrionaceae</taxon>
        <taxon>Nitratidesulfovibrio</taxon>
    </lineage>
</organism>
<dbReference type="EC" id="2.1.1.166" evidence="1"/>
<dbReference type="EMBL" id="CP000527">
    <property type="protein sequence ID" value="ABM28006.1"/>
    <property type="molecule type" value="Genomic_DNA"/>
</dbReference>
<dbReference type="RefSeq" id="WP_010939535.1">
    <property type="nucleotide sequence ID" value="NC_008751.1"/>
</dbReference>
<dbReference type="SMR" id="A1VC40"/>
<dbReference type="KEGG" id="dvl:Dvul_0985"/>
<dbReference type="HOGENOM" id="CLU_009422_4_0_7"/>
<dbReference type="Proteomes" id="UP000009173">
    <property type="component" value="Chromosome"/>
</dbReference>
<dbReference type="GO" id="GO:0005737">
    <property type="term" value="C:cytoplasm"/>
    <property type="evidence" value="ECO:0007669"/>
    <property type="project" value="UniProtKB-SubCell"/>
</dbReference>
<dbReference type="GO" id="GO:0008650">
    <property type="term" value="F:rRNA (uridine-2'-O-)-methyltransferase activity"/>
    <property type="evidence" value="ECO:0007669"/>
    <property type="project" value="UniProtKB-UniRule"/>
</dbReference>
<dbReference type="Gene3D" id="3.40.50.150">
    <property type="entry name" value="Vaccinia Virus protein VP39"/>
    <property type="match status" value="1"/>
</dbReference>
<dbReference type="HAMAP" id="MF_01547">
    <property type="entry name" value="RNA_methyltr_E"/>
    <property type="match status" value="1"/>
</dbReference>
<dbReference type="InterPro" id="IPR050082">
    <property type="entry name" value="RNA_methyltr_RlmE"/>
</dbReference>
<dbReference type="InterPro" id="IPR002877">
    <property type="entry name" value="RNA_MeTrfase_FtsJ_dom"/>
</dbReference>
<dbReference type="InterPro" id="IPR015507">
    <property type="entry name" value="rRNA-MeTfrase_E"/>
</dbReference>
<dbReference type="InterPro" id="IPR029063">
    <property type="entry name" value="SAM-dependent_MTases_sf"/>
</dbReference>
<dbReference type="PANTHER" id="PTHR10920">
    <property type="entry name" value="RIBOSOMAL RNA METHYLTRANSFERASE"/>
    <property type="match status" value="1"/>
</dbReference>
<dbReference type="PANTHER" id="PTHR10920:SF18">
    <property type="entry name" value="RRNA METHYLTRANSFERASE 2, MITOCHONDRIAL"/>
    <property type="match status" value="1"/>
</dbReference>
<dbReference type="Pfam" id="PF01728">
    <property type="entry name" value="FtsJ"/>
    <property type="match status" value="1"/>
</dbReference>
<dbReference type="PIRSF" id="PIRSF005461">
    <property type="entry name" value="23S_rRNA_mtase"/>
    <property type="match status" value="1"/>
</dbReference>
<dbReference type="SUPFAM" id="SSF53335">
    <property type="entry name" value="S-adenosyl-L-methionine-dependent methyltransferases"/>
    <property type="match status" value="1"/>
</dbReference>
<evidence type="ECO:0000255" key="1">
    <source>
        <dbReference type="HAMAP-Rule" id="MF_01547"/>
    </source>
</evidence>
<protein>
    <recommendedName>
        <fullName evidence="1">Ribosomal RNA large subunit methyltransferase E</fullName>
        <ecNumber evidence="1">2.1.1.166</ecNumber>
    </recommendedName>
    <alternativeName>
        <fullName evidence="1">23S rRNA Um2552 methyltransferase</fullName>
    </alternativeName>
    <alternativeName>
        <fullName evidence="1">rRNA (uridine-2'-O-)-methyltransferase</fullName>
    </alternativeName>
</protein>
<name>RLME_NITV4</name>
<gene>
    <name evidence="1" type="primary">rlmE</name>
    <name evidence="1" type="synonym">ftsJ</name>
    <name evidence="1" type="synonym">rrmJ</name>
    <name type="ordered locus">Dvul_0985</name>
</gene>
<keyword id="KW-0963">Cytoplasm</keyword>
<keyword id="KW-0489">Methyltransferase</keyword>
<keyword id="KW-0698">rRNA processing</keyword>
<keyword id="KW-0949">S-adenosyl-L-methionine</keyword>
<keyword id="KW-0808">Transferase</keyword>